<sequence>MRLDEYVHSEGYTESRSKAQDIILAGCVFVNGVKVTSKAHKIKDTDNIEVVQNIKYVSRAGEKLEKAFVEFGISVENKICLDIGASTGGFTDCLLKHGAKKVYALDVGHNQLVYKLRNDNRVVSIEDFNAKDINKEMFNDEIPSVIVSDVSFISITKIAPIIFKELNNLEFWVTLIKPQFEAERGDVSKGGIIRDDILREKILNNAISKIIDCGFKEVNRTISPIKGAKGNIEYLAHFII</sequence>
<keyword id="KW-0204">Cytolysis</keyword>
<keyword id="KW-0354">Hemolysis</keyword>
<keyword id="KW-0694">RNA-binding</keyword>
<keyword id="KW-0800">Toxin</keyword>
<keyword id="KW-0843">Virulence</keyword>
<protein>
    <recommendedName>
        <fullName>Hemolysin A</fullName>
    </recommendedName>
</protein>
<name>HLYA_BRAHO</name>
<proteinExistence type="evidence at transcript level"/>
<organism>
    <name type="scientific">Brachyspira hyodysenteriae</name>
    <name type="common">Treponema hyodysenteriae</name>
    <dbReference type="NCBI Taxonomy" id="159"/>
    <lineage>
        <taxon>Bacteria</taxon>
        <taxon>Pseudomonadati</taxon>
        <taxon>Spirochaetota</taxon>
        <taxon>Spirochaetia</taxon>
        <taxon>Brachyspirales</taxon>
        <taxon>Brachyspiraceae</taxon>
        <taxon>Brachyspira</taxon>
    </lineage>
</organism>
<dbReference type="EMBL" id="X61684">
    <property type="protein sequence ID" value="CAA43858.1"/>
    <property type="molecule type" value="Genomic_DNA"/>
</dbReference>
<dbReference type="PIR" id="A43863">
    <property type="entry name" value="A43863"/>
</dbReference>
<dbReference type="RefSeq" id="WP_012669791.1">
    <property type="nucleotide sequence ID" value="NZ_MKXF01000017.1"/>
</dbReference>
<dbReference type="SMR" id="Q06803"/>
<dbReference type="TCDB" id="1.C.109.1.1">
    <property type="family name" value="the bacterial hemolysin a (tlya) family"/>
</dbReference>
<dbReference type="OMA" id="VLMVKPQ"/>
<dbReference type="BRENDA" id="2.1.1.226">
    <property type="organism ID" value="6427"/>
</dbReference>
<dbReference type="GO" id="GO:0008168">
    <property type="term" value="F:methyltransferase activity"/>
    <property type="evidence" value="ECO:0007669"/>
    <property type="project" value="InterPro"/>
</dbReference>
<dbReference type="GO" id="GO:0003723">
    <property type="term" value="F:RNA binding"/>
    <property type="evidence" value="ECO:0007669"/>
    <property type="project" value="UniProtKB-KW"/>
</dbReference>
<dbReference type="GO" id="GO:0090729">
    <property type="term" value="F:toxin activity"/>
    <property type="evidence" value="ECO:0007669"/>
    <property type="project" value="UniProtKB-KW"/>
</dbReference>
<dbReference type="GO" id="GO:0031640">
    <property type="term" value="P:killing of cells of another organism"/>
    <property type="evidence" value="ECO:0007669"/>
    <property type="project" value="UniProtKB-KW"/>
</dbReference>
<dbReference type="GO" id="GO:0032259">
    <property type="term" value="P:methylation"/>
    <property type="evidence" value="ECO:0007669"/>
    <property type="project" value="InterPro"/>
</dbReference>
<dbReference type="CDD" id="cd02440">
    <property type="entry name" value="AdoMet_MTases"/>
    <property type="match status" value="1"/>
</dbReference>
<dbReference type="CDD" id="cd00165">
    <property type="entry name" value="S4"/>
    <property type="match status" value="1"/>
</dbReference>
<dbReference type="Gene3D" id="3.10.290.10">
    <property type="entry name" value="RNA-binding S4 domain"/>
    <property type="match status" value="1"/>
</dbReference>
<dbReference type="Gene3D" id="3.40.50.150">
    <property type="entry name" value="Vaccinia Virus protein VP39"/>
    <property type="match status" value="1"/>
</dbReference>
<dbReference type="InterPro" id="IPR004538">
    <property type="entry name" value="Hemolysin_A/TlyA"/>
</dbReference>
<dbReference type="InterPro" id="IPR002877">
    <property type="entry name" value="RNA_MeTrfase_FtsJ_dom"/>
</dbReference>
<dbReference type="InterPro" id="IPR002942">
    <property type="entry name" value="S4_RNA-bd"/>
</dbReference>
<dbReference type="InterPro" id="IPR036986">
    <property type="entry name" value="S4_RNA-bd_sf"/>
</dbReference>
<dbReference type="InterPro" id="IPR029063">
    <property type="entry name" value="SAM-dependent_MTases_sf"/>
</dbReference>
<dbReference type="InterPro" id="IPR047048">
    <property type="entry name" value="TlyA"/>
</dbReference>
<dbReference type="NCBIfam" id="TIGR00478">
    <property type="entry name" value="tly"/>
    <property type="match status" value="1"/>
</dbReference>
<dbReference type="PANTHER" id="PTHR32319">
    <property type="entry name" value="BACTERIAL HEMOLYSIN-LIKE PROTEIN"/>
    <property type="match status" value="1"/>
</dbReference>
<dbReference type="PANTHER" id="PTHR32319:SF0">
    <property type="entry name" value="BACTERIAL HEMOLYSIN-LIKE PROTEIN"/>
    <property type="match status" value="1"/>
</dbReference>
<dbReference type="Pfam" id="PF01728">
    <property type="entry name" value="FtsJ"/>
    <property type="match status" value="1"/>
</dbReference>
<dbReference type="Pfam" id="PF01479">
    <property type="entry name" value="S4"/>
    <property type="match status" value="1"/>
</dbReference>
<dbReference type="PIRSF" id="PIRSF005578">
    <property type="entry name" value="TlyA"/>
    <property type="match status" value="1"/>
</dbReference>
<dbReference type="SMART" id="SM00363">
    <property type="entry name" value="S4"/>
    <property type="match status" value="1"/>
</dbReference>
<dbReference type="SUPFAM" id="SSF55174">
    <property type="entry name" value="Alpha-L RNA-binding motif"/>
    <property type="match status" value="1"/>
</dbReference>
<dbReference type="SUPFAM" id="SSF53335">
    <property type="entry name" value="S-adenosyl-L-methionine-dependent methyltransferases"/>
    <property type="match status" value="1"/>
</dbReference>
<dbReference type="PROSITE" id="PS50889">
    <property type="entry name" value="S4"/>
    <property type="match status" value="1"/>
</dbReference>
<gene>
    <name type="primary">tlyA</name>
    <name type="synonym">tly</name>
</gene>
<comment type="function">
    <text>Bacterial hemolysins are exotoxins that attack blood cell membranes and cause cell rupture by mechanisms not clearly defined.</text>
</comment>
<comment type="induction">
    <text>By sodium ribonucleate.</text>
</comment>
<comment type="similarity">
    <text evidence="2">Belongs to the TlyA family.</text>
</comment>
<feature type="chain" id="PRO_0000083992" description="Hemolysin A">
    <location>
        <begin position="1"/>
        <end position="240"/>
    </location>
</feature>
<feature type="domain" description="S4 RNA-binding" evidence="1">
    <location>
        <begin position="1"/>
        <end position="61"/>
    </location>
</feature>
<accession>Q06803</accession>
<reference key="1">
    <citation type="journal article" date="1992" name="Infect. Immun.">
        <title>Cloning and expression of a Serpula (Treponema) hyodysenteriae hemolysin gene.</title>
        <authorList>
            <person name="Muir S."/>
            <person name="Koopman M.B.H."/>
            <person name="Libby S.J."/>
            <person name="Joens L.A."/>
            <person name="Heffron F."/>
            <person name="Kusters J.G."/>
        </authorList>
    </citation>
    <scope>NUCLEOTIDE SEQUENCE [GENOMIC DNA]</scope>
    <source>
        <strain>B204</strain>
    </source>
</reference>
<evidence type="ECO:0000255" key="1">
    <source>
        <dbReference type="PROSITE-ProRule" id="PRU00182"/>
    </source>
</evidence>
<evidence type="ECO:0000305" key="2"/>